<protein>
    <recommendedName>
        <fullName>Cytochrome B pre-mRNA-processing protein 1</fullName>
    </recommendedName>
</protein>
<keyword id="KW-0496">Mitochondrion</keyword>
<keyword id="KW-0507">mRNA processing</keyword>
<keyword id="KW-1185">Reference proteome</keyword>
<reference key="1">
    <citation type="journal article" date="1984" name="J. Biol. Chem.">
        <title>Assembly of the mitochondrial membrane system. Nucleotide sequence of a yeast nuclear gene (CBP1) involved in 5' end processing of cytochrome b pre-mRNA.</title>
        <authorList>
            <person name="Dieckmann C.L."/>
            <person name="Homison G."/>
            <person name="Tzagoloff A."/>
        </authorList>
    </citation>
    <scope>NUCLEOTIDE SEQUENCE [GENOMIC DNA]</scope>
    <scope>FUNCTION</scope>
    <scope>SUBCELLULAR LOCATION</scope>
</reference>
<reference key="2">
    <citation type="journal article" date="1994" name="Yeast">
        <title>Sequence analysis of a 40.2 kb DNA fragment located near the left telomere of yeast chromosome X.</title>
        <authorList>
            <person name="Vandenbol M."/>
            <person name="Durand P."/>
            <person name="Bolle P.-A."/>
            <person name="Dion C."/>
            <person name="Portetelle D."/>
            <person name="Hilger F."/>
        </authorList>
    </citation>
    <scope>NUCLEOTIDE SEQUENCE [GENOMIC DNA]</scope>
    <source>
        <strain>ATCC 204508 / S288c</strain>
    </source>
</reference>
<reference key="3">
    <citation type="journal article" date="1996" name="EMBO J.">
        <title>Complete nucleotide sequence of Saccharomyces cerevisiae chromosome X.</title>
        <authorList>
            <person name="Galibert F."/>
            <person name="Alexandraki D."/>
            <person name="Baur A."/>
            <person name="Boles E."/>
            <person name="Chalwatzis N."/>
            <person name="Chuat J.-C."/>
            <person name="Coster F."/>
            <person name="Cziepluch C."/>
            <person name="de Haan M."/>
            <person name="Domdey H."/>
            <person name="Durand P."/>
            <person name="Entian K.-D."/>
            <person name="Gatius M."/>
            <person name="Goffeau A."/>
            <person name="Grivell L.A."/>
            <person name="Hennemann A."/>
            <person name="Herbert C.J."/>
            <person name="Heumann K."/>
            <person name="Hilger F."/>
            <person name="Hollenberg C.P."/>
            <person name="Huang M.-E."/>
            <person name="Jacq C."/>
            <person name="Jauniaux J.-C."/>
            <person name="Katsoulou C."/>
            <person name="Kirchrath L."/>
            <person name="Kleine K."/>
            <person name="Kordes E."/>
            <person name="Koetter P."/>
            <person name="Liebl S."/>
            <person name="Louis E.J."/>
            <person name="Manus V."/>
            <person name="Mewes H.-W."/>
            <person name="Miosga T."/>
            <person name="Obermaier B."/>
            <person name="Perea J."/>
            <person name="Pohl T.M."/>
            <person name="Portetelle D."/>
            <person name="Pujol A."/>
            <person name="Purnelle B."/>
            <person name="Ramezani Rad M."/>
            <person name="Rasmussen S.W."/>
            <person name="Rose M."/>
            <person name="Rossau R."/>
            <person name="Schaaff-Gerstenschlaeger I."/>
            <person name="Smits P.H.M."/>
            <person name="Scarcez T."/>
            <person name="Soriano N."/>
            <person name="To Van D."/>
            <person name="Tzermia M."/>
            <person name="Van Broekhoven A."/>
            <person name="Vandenbol M."/>
            <person name="Wedler H."/>
            <person name="von Wettstein D."/>
            <person name="Wambutt R."/>
            <person name="Zagulski M."/>
            <person name="Zollner A."/>
            <person name="Karpfinger-Hartl L."/>
        </authorList>
    </citation>
    <scope>NUCLEOTIDE SEQUENCE [LARGE SCALE GENOMIC DNA]</scope>
    <source>
        <strain>ATCC 204508 / S288c</strain>
    </source>
</reference>
<reference key="4">
    <citation type="journal article" date="2014" name="G3 (Bethesda)">
        <title>The reference genome sequence of Saccharomyces cerevisiae: Then and now.</title>
        <authorList>
            <person name="Engel S.R."/>
            <person name="Dietrich F.S."/>
            <person name="Fisk D.G."/>
            <person name="Binkley G."/>
            <person name="Balakrishnan R."/>
            <person name="Costanzo M.C."/>
            <person name="Dwight S.S."/>
            <person name="Hitz B.C."/>
            <person name="Karra K."/>
            <person name="Nash R.S."/>
            <person name="Weng S."/>
            <person name="Wong E.D."/>
            <person name="Lloyd P."/>
            <person name="Skrzypek M.S."/>
            <person name="Miyasato S.R."/>
            <person name="Simison M."/>
            <person name="Cherry J.M."/>
        </authorList>
    </citation>
    <scope>GENOME REANNOTATION</scope>
    <source>
        <strain>ATCC 204508 / S288c</strain>
    </source>
</reference>
<reference key="5">
    <citation type="journal article" date="1989" name="Mol. Cell. Biol.">
        <title>Overproduction of yeast viruslike particles by strains deficient in a mitochondrial nuclease.</title>
        <authorList>
            <person name="Liu Y."/>
            <person name="Dieckmann C.L."/>
        </authorList>
    </citation>
    <scope>NUCLEOTIDE SEQUENCE [GENOMIC DNA] OF 589-654</scope>
</reference>
<reference key="6">
    <citation type="journal article" date="2003" name="Nature">
        <title>Global analysis of protein expression in yeast.</title>
        <authorList>
            <person name="Ghaemmaghami S."/>
            <person name="Huh W.-K."/>
            <person name="Bower K."/>
            <person name="Howson R.W."/>
            <person name="Belle A."/>
            <person name="Dephoure N."/>
            <person name="O'Shea E.K."/>
            <person name="Weissman J.S."/>
        </authorList>
    </citation>
    <scope>LEVEL OF PROTEIN EXPRESSION [LARGE SCALE ANALYSIS]</scope>
</reference>
<comment type="function">
    <text evidence="2">Responsible for conferring a stable 5'-end on cytochrome b mRNA.</text>
</comment>
<comment type="subcellular location">
    <subcellularLocation>
        <location evidence="3">Mitochondrion</location>
    </subcellularLocation>
</comment>
<comment type="miscellaneous">
    <text evidence="1">Present with 2180 molecules/cell in log phase SD medium.</text>
</comment>
<evidence type="ECO:0000269" key="1">
    <source>
    </source>
</evidence>
<evidence type="ECO:0000269" key="2">
    <source>
    </source>
</evidence>
<evidence type="ECO:0000305" key="3">
    <source>
    </source>
</evidence>
<name>CBP8_YEAST</name>
<organism>
    <name type="scientific">Saccharomyces cerevisiae (strain ATCC 204508 / S288c)</name>
    <name type="common">Baker's yeast</name>
    <dbReference type="NCBI Taxonomy" id="559292"/>
    <lineage>
        <taxon>Eukaryota</taxon>
        <taxon>Fungi</taxon>
        <taxon>Dikarya</taxon>
        <taxon>Ascomycota</taxon>
        <taxon>Saccharomycotina</taxon>
        <taxon>Saccharomycetes</taxon>
        <taxon>Saccharomycetales</taxon>
        <taxon>Saccharomycetaceae</taxon>
        <taxon>Saccharomyces</taxon>
    </lineage>
</organism>
<sequence>MFLPRLVRYRTERFIKMVPTRTLRRINHSSRDPIQKQVLALIKANANLNDNDKLKIRKYWSDMADYKSLRKQENSLLESSILHEVKIEDFISFINRTKTSSMTTRGIYRRECLYQCKKNLDLVNQVVSQVSSVRHQKPLTTQLDTMRWCVDDAIGTGDIVMAADLFLLYYRLFTDDKKLDEQYAKKIISVLAYPNPLHDHVHLVKYLQLNSLFESITGGGIKLTRFQLETLSNKALGLSNEAPQLCKAILNKLMNINYSLTNDLKLRDDQVLLAYKSIDENYRRGNVASVYSIWNKIKEHYVSISAHDSRIIYKVFKICTHNRAYRSICSEMFWQLTPEYYCNNPLILPAIIDFITKQDSLTMAKELMQNINRYTLPENHHIVWLNKRCLSSLLRMHLKFNDSNGVDRVLKQITTNFRALSQENYQAIIIHLFKTQNLDHIAKAVKLLDTIPPGQAMLAYGSIINEVVDWKLASKVKFTDNLMALVNDLLTKAHDFDPDHRNSLWNVVSALYIKKLCHYKKRDGKFVANAKKDIDLAKLLYINAAKRSKTYWTKSNCNPFIASSPCDVKLKVNNQNRFTILRNIALSALQIGRTDIFLWACAELYQNGMTIEELKLDWNFILKHQIRNSEFKTNKEIIQDIKKHGVSAVKRYLR</sequence>
<gene>
    <name type="primary">CBP1</name>
    <name type="ordered locus">YJL209W</name>
    <name type="ORF">HRA654</name>
    <name type="ORF">J0242</name>
</gene>
<feature type="chain" id="PRO_0000089378" description="Cytochrome B pre-mRNA-processing protein 1">
    <location>
        <begin position="1"/>
        <end position="654"/>
    </location>
</feature>
<proteinExistence type="evidence at protein level"/>
<dbReference type="EMBL" id="K02647">
    <property type="protein sequence ID" value="AAA34474.1"/>
    <property type="molecule type" value="Genomic_DNA"/>
</dbReference>
<dbReference type="EMBL" id="Z34098">
    <property type="protein sequence ID" value="CAA84002.1"/>
    <property type="molecule type" value="Genomic_DNA"/>
</dbReference>
<dbReference type="EMBL" id="Z49484">
    <property type="protein sequence ID" value="CAA89506.1"/>
    <property type="molecule type" value="Genomic_DNA"/>
</dbReference>
<dbReference type="EMBL" id="M28067">
    <property type="protein sequence ID" value="AAA34456.1"/>
    <property type="molecule type" value="Genomic_DNA"/>
</dbReference>
<dbReference type="EMBL" id="BK006943">
    <property type="protein sequence ID" value="DAA08601.1"/>
    <property type="molecule type" value="Genomic_DNA"/>
</dbReference>
<dbReference type="PIR" id="S05829">
    <property type="entry name" value="BVBYP1"/>
</dbReference>
<dbReference type="RefSeq" id="NP_012326.1">
    <property type="nucleotide sequence ID" value="NM_001181642.1"/>
</dbReference>
<dbReference type="BioGRID" id="33549">
    <property type="interactions" value="115"/>
</dbReference>
<dbReference type="FunCoup" id="P07252">
    <property type="interactions" value="65"/>
</dbReference>
<dbReference type="IntAct" id="P07252">
    <property type="interactions" value="29"/>
</dbReference>
<dbReference type="MINT" id="P07252"/>
<dbReference type="STRING" id="4932.YJL209W"/>
<dbReference type="iPTMnet" id="P07252"/>
<dbReference type="PaxDb" id="4932-YJL209W"/>
<dbReference type="PeptideAtlas" id="P07252"/>
<dbReference type="EnsemblFungi" id="YJL209W_mRNA">
    <property type="protein sequence ID" value="YJL209W"/>
    <property type="gene ID" value="YJL209W"/>
</dbReference>
<dbReference type="GeneID" id="853221"/>
<dbReference type="KEGG" id="sce:YJL209W"/>
<dbReference type="AGR" id="SGD:S000003745"/>
<dbReference type="SGD" id="S000003745">
    <property type="gene designation" value="CBP1"/>
</dbReference>
<dbReference type="VEuPathDB" id="FungiDB:YJL209W"/>
<dbReference type="eggNOG" id="ENOG502R3QS">
    <property type="taxonomic scope" value="Eukaryota"/>
</dbReference>
<dbReference type="HOGENOM" id="CLU_429070_0_0_1"/>
<dbReference type="InParanoid" id="P07252"/>
<dbReference type="OMA" id="MHLKFND"/>
<dbReference type="OrthoDB" id="4064185at2759"/>
<dbReference type="BioCyc" id="YEAST:G3O-31637-MONOMER"/>
<dbReference type="BioGRID-ORCS" id="853221">
    <property type="hits" value="0 hits in 10 CRISPR screens"/>
</dbReference>
<dbReference type="PRO" id="PR:P07252"/>
<dbReference type="Proteomes" id="UP000002311">
    <property type="component" value="Chromosome X"/>
</dbReference>
<dbReference type="RNAct" id="P07252">
    <property type="molecule type" value="protein"/>
</dbReference>
<dbReference type="GO" id="GO:0005739">
    <property type="term" value="C:mitochondrion"/>
    <property type="evidence" value="ECO:0000314"/>
    <property type="project" value="SGD"/>
</dbReference>
<dbReference type="GO" id="GO:0003729">
    <property type="term" value="F:mRNA binding"/>
    <property type="evidence" value="ECO:0000314"/>
    <property type="project" value="SGD"/>
</dbReference>
<dbReference type="GO" id="GO:0009060">
    <property type="term" value="P:aerobic respiration"/>
    <property type="evidence" value="ECO:0000315"/>
    <property type="project" value="SGD"/>
</dbReference>
<dbReference type="GO" id="GO:0000958">
    <property type="term" value="P:mitochondrial mRNA catabolic process"/>
    <property type="evidence" value="ECO:0000315"/>
    <property type="project" value="SGD"/>
</dbReference>
<dbReference type="GO" id="GO:0006397">
    <property type="term" value="P:mRNA processing"/>
    <property type="evidence" value="ECO:0007669"/>
    <property type="project" value="UniProtKB-KW"/>
</dbReference>
<accession>P07252</accession>
<accession>D6VVY5</accession>